<organism>
    <name type="scientific">Leuconostoc mesenteroides subsp. mesenteroides (strain ATCC 8293 / DSM 20343 / BCRC 11652 / CCM 1803 / JCM 6124 / NCDO 523 / NBRC 100496 / NCIMB 8023 / NCTC 12954 / NRRL B-1118 / 37Y)</name>
    <dbReference type="NCBI Taxonomy" id="203120"/>
    <lineage>
        <taxon>Bacteria</taxon>
        <taxon>Bacillati</taxon>
        <taxon>Bacillota</taxon>
        <taxon>Bacilli</taxon>
        <taxon>Lactobacillales</taxon>
        <taxon>Lactobacillaceae</taxon>
        <taxon>Leuconostoc</taxon>
    </lineage>
</organism>
<feature type="chain" id="PRO_1000072037" description="Chaperone protein DnaK">
    <location>
        <begin position="1"/>
        <end position="615"/>
    </location>
</feature>
<feature type="region of interest" description="Disordered" evidence="2">
    <location>
        <begin position="581"/>
        <end position="615"/>
    </location>
</feature>
<feature type="compositionally biased region" description="Basic and acidic residues" evidence="2">
    <location>
        <begin position="586"/>
        <end position="596"/>
    </location>
</feature>
<feature type="compositionally biased region" description="Acidic residues" evidence="2">
    <location>
        <begin position="598"/>
        <end position="607"/>
    </location>
</feature>
<feature type="modified residue" description="Phosphothreonine; by autocatalysis" evidence="1">
    <location>
        <position position="174"/>
    </location>
</feature>
<comment type="function">
    <text evidence="1">Acts as a chaperone.</text>
</comment>
<comment type="induction">
    <text evidence="1">By stress conditions e.g. heat shock.</text>
</comment>
<comment type="similarity">
    <text evidence="1">Belongs to the heat shock protein 70 family.</text>
</comment>
<gene>
    <name evidence="1" type="primary">dnaK</name>
    <name type="ordered locus">LEUM_1347</name>
</gene>
<protein>
    <recommendedName>
        <fullName evidence="1">Chaperone protein DnaK</fullName>
    </recommendedName>
    <alternativeName>
        <fullName evidence="1">HSP70</fullName>
    </alternativeName>
    <alternativeName>
        <fullName evidence="1">Heat shock 70 kDa protein</fullName>
    </alternativeName>
    <alternativeName>
        <fullName evidence="1">Heat shock protein 70</fullName>
    </alternativeName>
</protein>
<evidence type="ECO:0000255" key="1">
    <source>
        <dbReference type="HAMAP-Rule" id="MF_00332"/>
    </source>
</evidence>
<evidence type="ECO:0000256" key="2">
    <source>
        <dbReference type="SAM" id="MobiDB-lite"/>
    </source>
</evidence>
<accession>Q03WI2</accession>
<dbReference type="EMBL" id="CP000414">
    <property type="protein sequence ID" value="ABJ62440.1"/>
    <property type="molecule type" value="Genomic_DNA"/>
</dbReference>
<dbReference type="RefSeq" id="WP_011680047.1">
    <property type="nucleotide sequence ID" value="NC_008531.1"/>
</dbReference>
<dbReference type="SMR" id="Q03WI2"/>
<dbReference type="EnsemblBacteria" id="ABJ62440">
    <property type="protein sequence ID" value="ABJ62440"/>
    <property type="gene ID" value="LEUM_1347"/>
</dbReference>
<dbReference type="GeneID" id="29576075"/>
<dbReference type="KEGG" id="lme:LEUM_1347"/>
<dbReference type="eggNOG" id="COG0443">
    <property type="taxonomic scope" value="Bacteria"/>
</dbReference>
<dbReference type="HOGENOM" id="CLU_005965_2_4_9"/>
<dbReference type="Proteomes" id="UP000000362">
    <property type="component" value="Chromosome"/>
</dbReference>
<dbReference type="GO" id="GO:0005524">
    <property type="term" value="F:ATP binding"/>
    <property type="evidence" value="ECO:0007669"/>
    <property type="project" value="UniProtKB-UniRule"/>
</dbReference>
<dbReference type="GO" id="GO:0140662">
    <property type="term" value="F:ATP-dependent protein folding chaperone"/>
    <property type="evidence" value="ECO:0007669"/>
    <property type="project" value="InterPro"/>
</dbReference>
<dbReference type="GO" id="GO:0051082">
    <property type="term" value="F:unfolded protein binding"/>
    <property type="evidence" value="ECO:0007669"/>
    <property type="project" value="InterPro"/>
</dbReference>
<dbReference type="CDD" id="cd10234">
    <property type="entry name" value="ASKHA_NBD_HSP70_DnaK-like"/>
    <property type="match status" value="1"/>
</dbReference>
<dbReference type="FunFam" id="2.60.34.10:FF:000014">
    <property type="entry name" value="Chaperone protein DnaK HSP70"/>
    <property type="match status" value="1"/>
</dbReference>
<dbReference type="FunFam" id="3.30.420.40:FF:000020">
    <property type="entry name" value="Chaperone protein HscA homolog"/>
    <property type="match status" value="1"/>
</dbReference>
<dbReference type="FunFam" id="3.30.420.40:FF:000545">
    <property type="entry name" value="Endoplasmic reticulum chaperone BiP"/>
    <property type="match status" value="1"/>
</dbReference>
<dbReference type="FunFam" id="1.20.1270.10:FF:000001">
    <property type="entry name" value="Molecular chaperone DnaK"/>
    <property type="match status" value="1"/>
</dbReference>
<dbReference type="FunFam" id="3.90.640.10:FF:000003">
    <property type="entry name" value="Molecular chaperone DnaK"/>
    <property type="match status" value="1"/>
</dbReference>
<dbReference type="Gene3D" id="1.20.1270.10">
    <property type="match status" value="1"/>
</dbReference>
<dbReference type="Gene3D" id="3.30.420.40">
    <property type="match status" value="2"/>
</dbReference>
<dbReference type="Gene3D" id="3.90.640.10">
    <property type="entry name" value="Actin, Chain A, domain 4"/>
    <property type="match status" value="1"/>
</dbReference>
<dbReference type="Gene3D" id="2.60.34.10">
    <property type="entry name" value="Substrate Binding Domain Of DNAk, Chain A, domain 1"/>
    <property type="match status" value="1"/>
</dbReference>
<dbReference type="HAMAP" id="MF_00332">
    <property type="entry name" value="DnaK"/>
    <property type="match status" value="1"/>
</dbReference>
<dbReference type="InterPro" id="IPR043129">
    <property type="entry name" value="ATPase_NBD"/>
</dbReference>
<dbReference type="InterPro" id="IPR012725">
    <property type="entry name" value="Chaperone_DnaK"/>
</dbReference>
<dbReference type="InterPro" id="IPR018181">
    <property type="entry name" value="Heat_shock_70_CS"/>
</dbReference>
<dbReference type="InterPro" id="IPR029048">
    <property type="entry name" value="HSP70_C_sf"/>
</dbReference>
<dbReference type="InterPro" id="IPR029047">
    <property type="entry name" value="HSP70_peptide-bd_sf"/>
</dbReference>
<dbReference type="InterPro" id="IPR013126">
    <property type="entry name" value="Hsp_70_fam"/>
</dbReference>
<dbReference type="NCBIfam" id="NF001413">
    <property type="entry name" value="PRK00290.1"/>
    <property type="match status" value="1"/>
</dbReference>
<dbReference type="NCBIfam" id="TIGR02350">
    <property type="entry name" value="prok_dnaK"/>
    <property type="match status" value="1"/>
</dbReference>
<dbReference type="PANTHER" id="PTHR19375">
    <property type="entry name" value="HEAT SHOCK PROTEIN 70KDA"/>
    <property type="match status" value="1"/>
</dbReference>
<dbReference type="Pfam" id="PF00012">
    <property type="entry name" value="HSP70"/>
    <property type="match status" value="1"/>
</dbReference>
<dbReference type="PRINTS" id="PR00301">
    <property type="entry name" value="HEATSHOCK70"/>
</dbReference>
<dbReference type="SUPFAM" id="SSF53067">
    <property type="entry name" value="Actin-like ATPase domain"/>
    <property type="match status" value="2"/>
</dbReference>
<dbReference type="SUPFAM" id="SSF100934">
    <property type="entry name" value="Heat shock protein 70kD (HSP70), C-terminal subdomain"/>
    <property type="match status" value="1"/>
</dbReference>
<dbReference type="SUPFAM" id="SSF100920">
    <property type="entry name" value="Heat shock protein 70kD (HSP70), peptide-binding domain"/>
    <property type="match status" value="1"/>
</dbReference>
<dbReference type="PROSITE" id="PS00297">
    <property type="entry name" value="HSP70_1"/>
    <property type="match status" value="1"/>
</dbReference>
<dbReference type="PROSITE" id="PS00329">
    <property type="entry name" value="HSP70_2"/>
    <property type="match status" value="1"/>
</dbReference>
<dbReference type="PROSITE" id="PS01036">
    <property type="entry name" value="HSP70_3"/>
    <property type="match status" value="1"/>
</dbReference>
<sequence length="615" mass="65691">MSKIIGIDLGTTNSAVAVLEGGEPKIITNPDGGRTTPSVVSFKNGESQVGDVAKRQAITNPDTIISIKSHMGEAGYKVNANGKDYTPQEISAMILQYIKGYAEDYLGEKVEKAVITVPAYFNDAQRQATKDAGKIAGLEVERIINEPTAAALAYGLDKLDKDEKILVYDLGGGTFDVSILELGDGVFEVLSTNGDTHLGGDDFDNKVIDYLAEQFKSENGVDLKDDKLALQRLKDAAESAKKTLSSANEAQIDLPFIASGDNGPLHLQTSLTRAKFNELTADLIKKAEQPVLSALKDAGLSFSDIDEVILNGGSTRIPAVQESVKKMTGKEPNHSINPDEAVALGAAVQGGVITGDVKDVVLLDVTPLSLGIETMGGVFTKLIERNTTIPTSKSQVFSTAADNQPAVDIHVLQGERSMAADNKTLGRFQLADIPAAPRGVPQIEVTFDIDRNGIVNVSAKDLGTQKEQKITIQAAGGLSDEEIEKMMNDAKANEEADAKKKEAVDTRNEADQLIFQTEKTLEEVGDKLGDDEKKPTQDALEALKKAKEDAAADDADLTDLKAKSEELTKVAGELAMKLYQQAAPKDGAEGDAKSADDNTVDGDFEEVDPNKDDKK</sequence>
<proteinExistence type="inferred from homology"/>
<name>DNAK_LEUMM</name>
<keyword id="KW-0067">ATP-binding</keyword>
<keyword id="KW-0143">Chaperone</keyword>
<keyword id="KW-0547">Nucleotide-binding</keyword>
<keyword id="KW-0597">Phosphoprotein</keyword>
<keyword id="KW-1185">Reference proteome</keyword>
<keyword id="KW-0346">Stress response</keyword>
<reference key="1">
    <citation type="journal article" date="2006" name="Proc. Natl. Acad. Sci. U.S.A.">
        <title>Comparative genomics of the lactic acid bacteria.</title>
        <authorList>
            <person name="Makarova K.S."/>
            <person name="Slesarev A."/>
            <person name="Wolf Y.I."/>
            <person name="Sorokin A."/>
            <person name="Mirkin B."/>
            <person name="Koonin E.V."/>
            <person name="Pavlov A."/>
            <person name="Pavlova N."/>
            <person name="Karamychev V."/>
            <person name="Polouchine N."/>
            <person name="Shakhova V."/>
            <person name="Grigoriev I."/>
            <person name="Lou Y."/>
            <person name="Rohksar D."/>
            <person name="Lucas S."/>
            <person name="Huang K."/>
            <person name="Goodstein D.M."/>
            <person name="Hawkins T."/>
            <person name="Plengvidhya V."/>
            <person name="Welker D."/>
            <person name="Hughes J."/>
            <person name="Goh Y."/>
            <person name="Benson A."/>
            <person name="Baldwin K."/>
            <person name="Lee J.-H."/>
            <person name="Diaz-Muniz I."/>
            <person name="Dosti B."/>
            <person name="Smeianov V."/>
            <person name="Wechter W."/>
            <person name="Barabote R."/>
            <person name="Lorca G."/>
            <person name="Altermann E."/>
            <person name="Barrangou R."/>
            <person name="Ganesan B."/>
            <person name="Xie Y."/>
            <person name="Rawsthorne H."/>
            <person name="Tamir D."/>
            <person name="Parker C."/>
            <person name="Breidt F."/>
            <person name="Broadbent J.R."/>
            <person name="Hutkins R."/>
            <person name="O'Sullivan D."/>
            <person name="Steele J."/>
            <person name="Unlu G."/>
            <person name="Saier M.H. Jr."/>
            <person name="Klaenhammer T."/>
            <person name="Richardson P."/>
            <person name="Kozyavkin S."/>
            <person name="Weimer B.C."/>
            <person name="Mills D.A."/>
        </authorList>
    </citation>
    <scope>NUCLEOTIDE SEQUENCE [LARGE SCALE GENOMIC DNA]</scope>
    <source>
        <strain>ATCC 8293 / DSM 20343 / BCRC 11652 / CCM 1803 / JCM 6124 / NCDO 523 / NBRC 100496 / NCIMB 8023 / NCTC 12954 / NRRL B-1118 / 37Y</strain>
    </source>
</reference>